<gene>
    <name type="primary">znrf1</name>
    <name type="ORF">zgc:77896</name>
</gene>
<keyword id="KW-0967">Endosome</keyword>
<keyword id="KW-0449">Lipoprotein</keyword>
<keyword id="KW-0458">Lysosome</keyword>
<keyword id="KW-0472">Membrane</keyword>
<keyword id="KW-0479">Metal-binding</keyword>
<keyword id="KW-0519">Myristate</keyword>
<keyword id="KW-1185">Reference proteome</keyword>
<keyword id="KW-0808">Transferase</keyword>
<keyword id="KW-0833">Ubl conjugation pathway</keyword>
<keyword id="KW-0862">Zinc</keyword>
<keyword id="KW-0863">Zinc-finger</keyword>
<feature type="initiator methionine" description="Removed" evidence="2">
    <location>
        <position position="1"/>
    </location>
</feature>
<feature type="chain" id="PRO_0000277801" description="E3 ubiquitin-protein ligase znrf1">
    <location>
        <begin position="2"/>
        <end position="215"/>
    </location>
</feature>
<feature type="zinc finger region" description="RING-type; atypical" evidence="3">
    <location>
        <begin position="172"/>
        <end position="213"/>
    </location>
</feature>
<feature type="region of interest" description="Disordered" evidence="4">
    <location>
        <begin position="1"/>
        <end position="39"/>
    </location>
</feature>
<feature type="region of interest" description="Disordered" evidence="4">
    <location>
        <begin position="66"/>
        <end position="96"/>
    </location>
</feature>
<feature type="lipid moiety-binding region" description="N-myristoyl glycine" evidence="2">
    <location>
        <position position="2"/>
    </location>
</feature>
<evidence type="ECO:0000250" key="1"/>
<evidence type="ECO:0000255" key="2"/>
<evidence type="ECO:0000255" key="3">
    <source>
        <dbReference type="PROSITE-ProRule" id="PRU00175"/>
    </source>
</evidence>
<evidence type="ECO:0000256" key="4">
    <source>
        <dbReference type="SAM" id="MobiDB-lite"/>
    </source>
</evidence>
<comment type="function">
    <text evidence="1">E3 ubiquitin-protein ligase that plays a role in neuron cells differentiation. Plays a role in the establishment and maintenance of neuronal transmission and plasticity.</text>
</comment>
<comment type="catalytic activity">
    <reaction>
        <text>S-ubiquitinyl-[E2 ubiquitin-conjugating enzyme]-L-cysteine + [acceptor protein]-L-lysine = [E2 ubiquitin-conjugating enzyme]-L-cysteine + N(6)-ubiquitinyl-[acceptor protein]-L-lysine.</text>
        <dbReference type="EC" id="2.3.2.27"/>
    </reaction>
</comment>
<comment type="pathway">
    <text>Protein modification; protein ubiquitination.</text>
</comment>
<comment type="subcellular location">
    <subcellularLocation>
        <location evidence="1">Endosome</location>
    </subcellularLocation>
    <subcellularLocation>
        <location evidence="1">Lysosome</location>
    </subcellularLocation>
    <subcellularLocation>
        <location evidence="1">Membrane</location>
        <topology evidence="1">Peripheral membrane protein</topology>
    </subcellularLocation>
</comment>
<comment type="domain">
    <text evidence="1">The RING-type zinc finger domain is required for E3 ligase activity.</text>
</comment>
<protein>
    <recommendedName>
        <fullName>E3 ubiquitin-protein ligase znrf1</fullName>
        <ecNumber>2.3.2.27</ecNumber>
    </recommendedName>
    <alternativeName>
        <fullName>RING-type E3 ubiquitin transferase znrf1</fullName>
    </alternativeName>
    <alternativeName>
        <fullName>Zinc/RING finger protein 1</fullName>
    </alternativeName>
</protein>
<sequence>MGGKQSTAGRPRGAFPGVSTDDSAVPPSAHFGHYRPGGTMGLRSRSVSSVAGMGIDHSATVPFGFYTPRGTDSDRAGGGSGSDPAHNGNGYQETGGGHHTDGMLYLGSRASLADTLPLHIAPRWFSAHSGFKCPVCSKSVASNEMEVHFIMCLSKPRLSYNDDVLSRDAGECVICLEELQQGDTIARLPCLCIYHKSCIDSWFEINRSCPEHPSD</sequence>
<name>ZNRF1_DANRE</name>
<proteinExistence type="evidence at transcript level"/>
<reference key="1">
    <citation type="submission" date="2003-12" db="EMBL/GenBank/DDBJ databases">
        <authorList>
            <consortium name="NIH - Zebrafish Gene Collection (ZGC) project"/>
        </authorList>
    </citation>
    <scope>NUCLEOTIDE SEQUENCE [LARGE SCALE MRNA]</scope>
</reference>
<accession>Q6P4U6</accession>
<dbReference type="EC" id="2.3.2.27"/>
<dbReference type="EMBL" id="BC063239">
    <property type="protein sequence ID" value="AAH63239.1"/>
    <property type="molecule type" value="mRNA"/>
</dbReference>
<dbReference type="RefSeq" id="NP_957164.1">
    <property type="nucleotide sequence ID" value="NM_200870.1"/>
</dbReference>
<dbReference type="SMR" id="Q6P4U6"/>
<dbReference type="FunCoup" id="Q6P4U6">
    <property type="interactions" value="356"/>
</dbReference>
<dbReference type="STRING" id="7955.ENSDARP00000026082"/>
<dbReference type="PaxDb" id="7955-ENSDARP00000026082"/>
<dbReference type="Ensembl" id="ENSDART00000010495">
    <property type="protein sequence ID" value="ENSDARP00000026082"/>
    <property type="gene ID" value="ENSDARG00000020475"/>
</dbReference>
<dbReference type="GeneID" id="393844"/>
<dbReference type="KEGG" id="dre:393844"/>
<dbReference type="AGR" id="ZFIN:ZDB-GENE-040426-1905"/>
<dbReference type="CTD" id="84937"/>
<dbReference type="ZFIN" id="ZDB-GENE-040426-1905">
    <property type="gene designation" value="znrf1"/>
</dbReference>
<dbReference type="eggNOG" id="KOG0801">
    <property type="taxonomic scope" value="Eukaryota"/>
</dbReference>
<dbReference type="HOGENOM" id="CLU_062700_0_1_1"/>
<dbReference type="InParanoid" id="Q6P4U6"/>
<dbReference type="OMA" id="TPYAHGN"/>
<dbReference type="OrthoDB" id="10057496at2759"/>
<dbReference type="PhylomeDB" id="Q6P4U6"/>
<dbReference type="TreeFam" id="TF317681"/>
<dbReference type="Reactome" id="R-DRE-983168">
    <property type="pathway name" value="Antigen processing: Ubiquitination &amp; Proteasome degradation"/>
</dbReference>
<dbReference type="UniPathway" id="UPA00143"/>
<dbReference type="PRO" id="PR:Q6P4U6"/>
<dbReference type="Proteomes" id="UP000000437">
    <property type="component" value="Chromosome 25"/>
</dbReference>
<dbReference type="Bgee" id="ENSDARG00000020475">
    <property type="expression patterns" value="Expressed in muscle tissue and 30 other cell types or tissues"/>
</dbReference>
<dbReference type="GO" id="GO:0005737">
    <property type="term" value="C:cytoplasm"/>
    <property type="evidence" value="ECO:0000318"/>
    <property type="project" value="GO_Central"/>
</dbReference>
<dbReference type="GO" id="GO:0005768">
    <property type="term" value="C:endosome"/>
    <property type="evidence" value="ECO:0007669"/>
    <property type="project" value="UniProtKB-SubCell"/>
</dbReference>
<dbReference type="GO" id="GO:0043231">
    <property type="term" value="C:intracellular membrane-bounded organelle"/>
    <property type="evidence" value="ECO:0000318"/>
    <property type="project" value="GO_Central"/>
</dbReference>
<dbReference type="GO" id="GO:0005764">
    <property type="term" value="C:lysosome"/>
    <property type="evidence" value="ECO:0007669"/>
    <property type="project" value="UniProtKB-SubCell"/>
</dbReference>
<dbReference type="GO" id="GO:0016020">
    <property type="term" value="C:membrane"/>
    <property type="evidence" value="ECO:0000318"/>
    <property type="project" value="GO_Central"/>
</dbReference>
<dbReference type="GO" id="GO:0061630">
    <property type="term" value="F:ubiquitin protein ligase activity"/>
    <property type="evidence" value="ECO:0000318"/>
    <property type="project" value="GO_Central"/>
</dbReference>
<dbReference type="GO" id="GO:0004842">
    <property type="term" value="F:ubiquitin-protein transferase activity"/>
    <property type="evidence" value="ECO:0000250"/>
    <property type="project" value="UniProtKB"/>
</dbReference>
<dbReference type="GO" id="GO:0008270">
    <property type="term" value="F:zinc ion binding"/>
    <property type="evidence" value="ECO:0007669"/>
    <property type="project" value="UniProtKB-KW"/>
</dbReference>
<dbReference type="GO" id="GO:0043161">
    <property type="term" value="P:proteasome-mediated ubiquitin-dependent protein catabolic process"/>
    <property type="evidence" value="ECO:0000250"/>
    <property type="project" value="UniProtKB"/>
</dbReference>
<dbReference type="GO" id="GO:0070936">
    <property type="term" value="P:protein K48-linked ubiquitination"/>
    <property type="evidence" value="ECO:0000250"/>
    <property type="project" value="UniProtKB"/>
</dbReference>
<dbReference type="CDD" id="cd16695">
    <property type="entry name" value="mRING-CH-C4HC2H_ZNRF2"/>
    <property type="match status" value="1"/>
</dbReference>
<dbReference type="FunFam" id="3.30.40.10:FF:000363">
    <property type="entry name" value="E3 ubiquitin-protein ligase ZNRF2"/>
    <property type="match status" value="1"/>
</dbReference>
<dbReference type="Gene3D" id="3.30.40.10">
    <property type="entry name" value="Zinc/RING finger domain, C3HC4 (zinc finger)"/>
    <property type="match status" value="1"/>
</dbReference>
<dbReference type="InterPro" id="IPR001841">
    <property type="entry name" value="Znf_RING"/>
</dbReference>
<dbReference type="InterPro" id="IPR013083">
    <property type="entry name" value="Znf_RING/FYVE/PHD"/>
</dbReference>
<dbReference type="InterPro" id="IPR051878">
    <property type="entry name" value="ZNRF_ubiq-protein_ligase"/>
</dbReference>
<dbReference type="PANTHER" id="PTHR46661:SF2">
    <property type="entry name" value="E3 UBIQUITIN-PROTEIN LIGASE ZNRF1"/>
    <property type="match status" value="1"/>
</dbReference>
<dbReference type="PANTHER" id="PTHR46661">
    <property type="entry name" value="E3 UBIQUITIN-PROTEIN LIGASE ZNRF1-LIKE PROTEIN"/>
    <property type="match status" value="1"/>
</dbReference>
<dbReference type="Pfam" id="PF13639">
    <property type="entry name" value="zf-RING_2"/>
    <property type="match status" value="1"/>
</dbReference>
<dbReference type="SMART" id="SM00184">
    <property type="entry name" value="RING"/>
    <property type="match status" value="1"/>
</dbReference>
<dbReference type="SUPFAM" id="SSF57850">
    <property type="entry name" value="RING/U-box"/>
    <property type="match status" value="1"/>
</dbReference>
<dbReference type="PROSITE" id="PS50089">
    <property type="entry name" value="ZF_RING_2"/>
    <property type="match status" value="1"/>
</dbReference>
<organism>
    <name type="scientific">Danio rerio</name>
    <name type="common">Zebrafish</name>
    <name type="synonym">Brachydanio rerio</name>
    <dbReference type="NCBI Taxonomy" id="7955"/>
    <lineage>
        <taxon>Eukaryota</taxon>
        <taxon>Metazoa</taxon>
        <taxon>Chordata</taxon>
        <taxon>Craniata</taxon>
        <taxon>Vertebrata</taxon>
        <taxon>Euteleostomi</taxon>
        <taxon>Actinopterygii</taxon>
        <taxon>Neopterygii</taxon>
        <taxon>Teleostei</taxon>
        <taxon>Ostariophysi</taxon>
        <taxon>Cypriniformes</taxon>
        <taxon>Danionidae</taxon>
        <taxon>Danioninae</taxon>
        <taxon>Danio</taxon>
    </lineage>
</organism>